<dbReference type="EC" id="3.1.26.4"/>
<dbReference type="EMBL" id="AE004439">
    <property type="protein sequence ID" value="AAK04082.1"/>
    <property type="molecule type" value="Genomic_DNA"/>
</dbReference>
<dbReference type="RefSeq" id="WP_005725099.1">
    <property type="nucleotide sequence ID" value="NC_002663.1"/>
</dbReference>
<dbReference type="SMR" id="P57986"/>
<dbReference type="STRING" id="272843.PM1998"/>
<dbReference type="EnsemblBacteria" id="AAK04082">
    <property type="protein sequence ID" value="AAK04082"/>
    <property type="gene ID" value="PM1998"/>
</dbReference>
<dbReference type="GeneID" id="77207325"/>
<dbReference type="KEGG" id="pmu:PM1998"/>
<dbReference type="HOGENOM" id="CLU_036532_3_2_6"/>
<dbReference type="OrthoDB" id="9803420at2"/>
<dbReference type="Proteomes" id="UP000000809">
    <property type="component" value="Chromosome"/>
</dbReference>
<dbReference type="GO" id="GO:0005737">
    <property type="term" value="C:cytoplasm"/>
    <property type="evidence" value="ECO:0007669"/>
    <property type="project" value="UniProtKB-SubCell"/>
</dbReference>
<dbReference type="GO" id="GO:0032299">
    <property type="term" value="C:ribonuclease H2 complex"/>
    <property type="evidence" value="ECO:0007669"/>
    <property type="project" value="TreeGrafter"/>
</dbReference>
<dbReference type="GO" id="GO:0030145">
    <property type="term" value="F:manganese ion binding"/>
    <property type="evidence" value="ECO:0007669"/>
    <property type="project" value="UniProtKB-UniRule"/>
</dbReference>
<dbReference type="GO" id="GO:0003723">
    <property type="term" value="F:RNA binding"/>
    <property type="evidence" value="ECO:0007669"/>
    <property type="project" value="InterPro"/>
</dbReference>
<dbReference type="GO" id="GO:0004523">
    <property type="term" value="F:RNA-DNA hybrid ribonuclease activity"/>
    <property type="evidence" value="ECO:0007669"/>
    <property type="project" value="UniProtKB-UniRule"/>
</dbReference>
<dbReference type="GO" id="GO:0043137">
    <property type="term" value="P:DNA replication, removal of RNA primer"/>
    <property type="evidence" value="ECO:0007669"/>
    <property type="project" value="TreeGrafter"/>
</dbReference>
<dbReference type="GO" id="GO:0006298">
    <property type="term" value="P:mismatch repair"/>
    <property type="evidence" value="ECO:0007669"/>
    <property type="project" value="TreeGrafter"/>
</dbReference>
<dbReference type="CDD" id="cd07182">
    <property type="entry name" value="RNase_HII_bacteria_HII_like"/>
    <property type="match status" value="1"/>
</dbReference>
<dbReference type="FunFam" id="3.30.420.10:FF:000006">
    <property type="entry name" value="Ribonuclease HII"/>
    <property type="match status" value="1"/>
</dbReference>
<dbReference type="Gene3D" id="3.30.420.10">
    <property type="entry name" value="Ribonuclease H-like superfamily/Ribonuclease H"/>
    <property type="match status" value="1"/>
</dbReference>
<dbReference type="HAMAP" id="MF_00052_B">
    <property type="entry name" value="RNase_HII_B"/>
    <property type="match status" value="1"/>
</dbReference>
<dbReference type="InterPro" id="IPR022898">
    <property type="entry name" value="RNase_HII"/>
</dbReference>
<dbReference type="InterPro" id="IPR001352">
    <property type="entry name" value="RNase_HII/HIII"/>
</dbReference>
<dbReference type="InterPro" id="IPR024567">
    <property type="entry name" value="RNase_HII/HIII_dom"/>
</dbReference>
<dbReference type="InterPro" id="IPR012337">
    <property type="entry name" value="RNaseH-like_sf"/>
</dbReference>
<dbReference type="InterPro" id="IPR036397">
    <property type="entry name" value="RNaseH_sf"/>
</dbReference>
<dbReference type="NCBIfam" id="NF000594">
    <property type="entry name" value="PRK00015.1-1"/>
    <property type="match status" value="1"/>
</dbReference>
<dbReference type="NCBIfam" id="NF000595">
    <property type="entry name" value="PRK00015.1-3"/>
    <property type="match status" value="1"/>
</dbReference>
<dbReference type="NCBIfam" id="NF000596">
    <property type="entry name" value="PRK00015.1-4"/>
    <property type="match status" value="1"/>
</dbReference>
<dbReference type="PANTHER" id="PTHR10954">
    <property type="entry name" value="RIBONUCLEASE H2 SUBUNIT A"/>
    <property type="match status" value="1"/>
</dbReference>
<dbReference type="PANTHER" id="PTHR10954:SF18">
    <property type="entry name" value="RIBONUCLEASE HII"/>
    <property type="match status" value="1"/>
</dbReference>
<dbReference type="Pfam" id="PF01351">
    <property type="entry name" value="RNase_HII"/>
    <property type="match status" value="1"/>
</dbReference>
<dbReference type="SUPFAM" id="SSF53098">
    <property type="entry name" value="Ribonuclease H-like"/>
    <property type="match status" value="1"/>
</dbReference>
<dbReference type="PROSITE" id="PS51975">
    <property type="entry name" value="RNASE_H_2"/>
    <property type="match status" value="1"/>
</dbReference>
<gene>
    <name type="primary">rnhB</name>
    <name type="ordered locus">PM1998</name>
</gene>
<reference key="1">
    <citation type="journal article" date="2001" name="Proc. Natl. Acad. Sci. U.S.A.">
        <title>Complete genomic sequence of Pasteurella multocida Pm70.</title>
        <authorList>
            <person name="May B.J."/>
            <person name="Zhang Q."/>
            <person name="Li L.L."/>
            <person name="Paustian M.L."/>
            <person name="Whittam T.S."/>
            <person name="Kapur V."/>
        </authorList>
    </citation>
    <scope>NUCLEOTIDE SEQUENCE [LARGE SCALE GENOMIC DNA]</scope>
    <source>
        <strain>Pm70</strain>
    </source>
</reference>
<accession>P57986</accession>
<proteinExistence type="inferred from homology"/>
<feature type="chain" id="PRO_0000111598" description="Ribonuclease HII">
    <location>
        <begin position="1"/>
        <end position="197"/>
    </location>
</feature>
<feature type="domain" description="RNase H type-2" evidence="2">
    <location>
        <begin position="10"/>
        <end position="197"/>
    </location>
</feature>
<feature type="binding site" evidence="1">
    <location>
        <position position="16"/>
    </location>
    <ligand>
        <name>a divalent metal cation</name>
        <dbReference type="ChEBI" id="CHEBI:60240"/>
    </ligand>
</feature>
<feature type="binding site" evidence="1">
    <location>
        <position position="17"/>
    </location>
    <ligand>
        <name>a divalent metal cation</name>
        <dbReference type="ChEBI" id="CHEBI:60240"/>
    </ligand>
</feature>
<feature type="binding site" evidence="1">
    <location>
        <position position="108"/>
    </location>
    <ligand>
        <name>a divalent metal cation</name>
        <dbReference type="ChEBI" id="CHEBI:60240"/>
    </ligand>
</feature>
<keyword id="KW-0963">Cytoplasm</keyword>
<keyword id="KW-0255">Endonuclease</keyword>
<keyword id="KW-0378">Hydrolase</keyword>
<keyword id="KW-0464">Manganese</keyword>
<keyword id="KW-0479">Metal-binding</keyword>
<keyword id="KW-0540">Nuclease</keyword>
<keyword id="KW-1185">Reference proteome</keyword>
<protein>
    <recommendedName>
        <fullName>Ribonuclease HII</fullName>
        <shortName>RNase HII</shortName>
        <ecNumber>3.1.26.4</ecNumber>
    </recommendedName>
</protein>
<sequence length="197" mass="21589">MVFEYPKGVELIAGVDEVGRGPLVGAVVTAAVILDPHQPILGLNDSKKLSEKKRLLLAEEIKQKALAWSLGRAEAEEIDQLNILHATMLAMKRAVENLKIQPHFVLVDGNRVPELMIPAQAIVKGDGLVAEISAASILAKVARDQEMAELDKRYPEYAFAQHKGYPTALHLAKLAELGPLAQHRRSFAPVRKLLNTL</sequence>
<comment type="function">
    <text evidence="1">Endonuclease that specifically degrades the RNA of RNA-DNA hybrids.</text>
</comment>
<comment type="catalytic activity">
    <reaction>
        <text>Endonucleolytic cleavage to 5'-phosphomonoester.</text>
        <dbReference type="EC" id="3.1.26.4"/>
    </reaction>
</comment>
<comment type="cofactor">
    <cofactor evidence="1">
        <name>Mn(2+)</name>
        <dbReference type="ChEBI" id="CHEBI:29035"/>
    </cofactor>
    <cofactor evidence="1">
        <name>Mg(2+)</name>
        <dbReference type="ChEBI" id="CHEBI:18420"/>
    </cofactor>
    <text evidence="1">Manganese or magnesium. Binds 1 divalent metal ion per monomer in the absence of substrate. May bind a second metal ion after substrate binding.</text>
</comment>
<comment type="subcellular location">
    <subcellularLocation>
        <location evidence="3">Cytoplasm</location>
    </subcellularLocation>
</comment>
<comment type="similarity">
    <text evidence="3">Belongs to the RNase HII family.</text>
</comment>
<name>RNH2_PASMU</name>
<evidence type="ECO:0000250" key="1"/>
<evidence type="ECO:0000255" key="2">
    <source>
        <dbReference type="PROSITE-ProRule" id="PRU01319"/>
    </source>
</evidence>
<evidence type="ECO:0000305" key="3"/>
<organism>
    <name type="scientific">Pasteurella multocida (strain Pm70)</name>
    <dbReference type="NCBI Taxonomy" id="272843"/>
    <lineage>
        <taxon>Bacteria</taxon>
        <taxon>Pseudomonadati</taxon>
        <taxon>Pseudomonadota</taxon>
        <taxon>Gammaproteobacteria</taxon>
        <taxon>Pasteurellales</taxon>
        <taxon>Pasteurellaceae</taxon>
        <taxon>Pasteurella</taxon>
    </lineage>
</organism>